<dbReference type="EMBL" id="AE004439">
    <property type="protein sequence ID" value="AAK02093.1"/>
    <property type="molecule type" value="Genomic_DNA"/>
</dbReference>
<dbReference type="RefSeq" id="WP_010906429.1">
    <property type="nucleotide sequence ID" value="NC_002663.1"/>
</dbReference>
<dbReference type="SMR" id="Q9CPM8"/>
<dbReference type="STRING" id="272843.PM0009"/>
<dbReference type="EnsemblBacteria" id="AAK02093">
    <property type="protein sequence ID" value="AAK02093"/>
    <property type="gene ID" value="PM0009"/>
</dbReference>
<dbReference type="KEGG" id="pmu:PM0009"/>
<dbReference type="HOGENOM" id="CLU_079503_1_0_6"/>
<dbReference type="OrthoDB" id="9793584at2"/>
<dbReference type="Proteomes" id="UP000000809">
    <property type="component" value="Chromosome"/>
</dbReference>
<dbReference type="GO" id="GO:0005886">
    <property type="term" value="C:plasma membrane"/>
    <property type="evidence" value="ECO:0007669"/>
    <property type="project" value="UniProtKB-SubCell"/>
</dbReference>
<dbReference type="GO" id="GO:0020037">
    <property type="term" value="F:heme binding"/>
    <property type="evidence" value="ECO:0007669"/>
    <property type="project" value="InterPro"/>
</dbReference>
<dbReference type="GO" id="GO:0046872">
    <property type="term" value="F:metal ion binding"/>
    <property type="evidence" value="ECO:0007669"/>
    <property type="project" value="UniProtKB-KW"/>
</dbReference>
<dbReference type="GO" id="GO:0017004">
    <property type="term" value="P:cytochrome complex assembly"/>
    <property type="evidence" value="ECO:0007669"/>
    <property type="project" value="UniProtKB-KW"/>
</dbReference>
<dbReference type="FunFam" id="2.40.50.140:FF:000104">
    <property type="entry name" value="Cytochrome c-type biogenesis protein CcmE"/>
    <property type="match status" value="1"/>
</dbReference>
<dbReference type="Gene3D" id="2.40.50.140">
    <property type="entry name" value="Nucleic acid-binding proteins"/>
    <property type="match status" value="1"/>
</dbReference>
<dbReference type="HAMAP" id="MF_01959">
    <property type="entry name" value="CcmE"/>
    <property type="match status" value="1"/>
</dbReference>
<dbReference type="InterPro" id="IPR004329">
    <property type="entry name" value="CcmE"/>
</dbReference>
<dbReference type="InterPro" id="IPR036127">
    <property type="entry name" value="CcmE-like_sf"/>
</dbReference>
<dbReference type="InterPro" id="IPR012340">
    <property type="entry name" value="NA-bd_OB-fold"/>
</dbReference>
<dbReference type="NCBIfam" id="NF009638">
    <property type="entry name" value="PRK13165.1"/>
    <property type="match status" value="1"/>
</dbReference>
<dbReference type="NCBIfam" id="NF009727">
    <property type="entry name" value="PRK13254.1-1"/>
    <property type="match status" value="1"/>
</dbReference>
<dbReference type="NCBIfam" id="NF009729">
    <property type="entry name" value="PRK13254.1-3"/>
    <property type="match status" value="1"/>
</dbReference>
<dbReference type="PANTHER" id="PTHR34128">
    <property type="entry name" value="CYTOCHROME C-TYPE BIOGENESIS PROTEIN CCME HOMOLOG, MITOCHONDRIAL"/>
    <property type="match status" value="1"/>
</dbReference>
<dbReference type="PANTHER" id="PTHR34128:SF2">
    <property type="entry name" value="CYTOCHROME C-TYPE BIOGENESIS PROTEIN CCME HOMOLOG, MITOCHONDRIAL"/>
    <property type="match status" value="1"/>
</dbReference>
<dbReference type="Pfam" id="PF03100">
    <property type="entry name" value="CcmE"/>
    <property type="match status" value="1"/>
</dbReference>
<dbReference type="SUPFAM" id="SSF82093">
    <property type="entry name" value="Heme chaperone CcmE"/>
    <property type="match status" value="1"/>
</dbReference>
<comment type="function">
    <text evidence="1">Heme chaperone required for the biogenesis of c-type cytochromes. Transiently binds heme delivered by CcmC and transfers the heme to apo-cytochromes in a process facilitated by CcmF and CcmH.</text>
</comment>
<comment type="subcellular location">
    <subcellularLocation>
        <location evidence="1">Cell inner membrane</location>
        <topology evidence="1">Single-pass type II membrane protein</topology>
        <orientation evidence="1">Periplasmic side</orientation>
    </subcellularLocation>
</comment>
<comment type="similarity">
    <text evidence="1">Belongs to the CcmE/CycJ family.</text>
</comment>
<feature type="chain" id="PRO_0000238830" description="Cytochrome c-type biogenesis protein CcmE">
    <location>
        <begin position="1"/>
        <end position="179"/>
    </location>
</feature>
<feature type="topological domain" description="Cytoplasmic" evidence="1">
    <location>
        <begin position="1"/>
        <end position="8"/>
    </location>
</feature>
<feature type="transmembrane region" description="Helical; Signal-anchor for type II membrane protein" evidence="1">
    <location>
        <begin position="9"/>
        <end position="29"/>
    </location>
</feature>
<feature type="topological domain" description="Periplasmic" evidence="1">
    <location>
        <begin position="30"/>
        <end position="179"/>
    </location>
</feature>
<feature type="region of interest" description="Disordered" evidence="2">
    <location>
        <begin position="151"/>
        <end position="179"/>
    </location>
</feature>
<feature type="compositionally biased region" description="Basic and acidic residues" evidence="2">
    <location>
        <begin position="156"/>
        <end position="169"/>
    </location>
</feature>
<feature type="compositionally biased region" description="Polar residues" evidence="2">
    <location>
        <begin position="170"/>
        <end position="179"/>
    </location>
</feature>
<feature type="binding site" description="covalent" evidence="1">
    <location>
        <position position="131"/>
    </location>
    <ligand>
        <name>heme</name>
        <dbReference type="ChEBI" id="CHEBI:30413"/>
    </ligand>
</feature>
<feature type="binding site" description="axial binding residue" evidence="1">
    <location>
        <position position="135"/>
    </location>
    <ligand>
        <name>heme</name>
        <dbReference type="ChEBI" id="CHEBI:30413"/>
    </ligand>
    <ligandPart>
        <name>Fe</name>
        <dbReference type="ChEBI" id="CHEBI:18248"/>
    </ligandPart>
</feature>
<evidence type="ECO:0000255" key="1">
    <source>
        <dbReference type="HAMAP-Rule" id="MF_01959"/>
    </source>
</evidence>
<evidence type="ECO:0000256" key="2">
    <source>
        <dbReference type="SAM" id="MobiDB-lite"/>
    </source>
</evidence>
<reference key="1">
    <citation type="journal article" date="2001" name="Proc. Natl. Acad. Sci. U.S.A.">
        <title>Complete genomic sequence of Pasteurella multocida Pm70.</title>
        <authorList>
            <person name="May B.J."/>
            <person name="Zhang Q."/>
            <person name="Li L.L."/>
            <person name="Paustian M.L."/>
            <person name="Whittam T.S."/>
            <person name="Kapur V."/>
        </authorList>
    </citation>
    <scope>NUCLEOTIDE SEQUENCE [LARGE SCALE GENOMIC DNA]</scope>
    <source>
        <strain>Pm70</strain>
    </source>
</reference>
<keyword id="KW-0997">Cell inner membrane</keyword>
<keyword id="KW-1003">Cell membrane</keyword>
<keyword id="KW-0201">Cytochrome c-type biogenesis</keyword>
<keyword id="KW-0349">Heme</keyword>
<keyword id="KW-0408">Iron</keyword>
<keyword id="KW-0472">Membrane</keyword>
<keyword id="KW-0479">Metal-binding</keyword>
<keyword id="KW-1185">Reference proteome</keyword>
<keyword id="KW-0735">Signal-anchor</keyword>
<keyword id="KW-0812">Transmembrane</keyword>
<keyword id="KW-1133">Transmembrane helix</keyword>
<sequence>MTPRRKSRMTVILFVLLGISIASALVLYALRQNIDLFYTPTEVVYGKNEDATQKPSVGQRIRVGGMVVAGTVERDPKSLKVKFDLNDIGPSISVEYEGILPDLFREGQGIVAQGVLKTPTLLEATEVLAKHDENYVPPELDAQMQKVHKPMGVADLKGESERDRQEKAYQKTSMQEGQK</sequence>
<organism>
    <name type="scientific">Pasteurella multocida (strain Pm70)</name>
    <dbReference type="NCBI Taxonomy" id="272843"/>
    <lineage>
        <taxon>Bacteria</taxon>
        <taxon>Pseudomonadati</taxon>
        <taxon>Pseudomonadota</taxon>
        <taxon>Gammaproteobacteria</taxon>
        <taxon>Pasteurellales</taxon>
        <taxon>Pasteurellaceae</taxon>
        <taxon>Pasteurella</taxon>
    </lineage>
</organism>
<protein>
    <recommendedName>
        <fullName evidence="1">Cytochrome c-type biogenesis protein CcmE</fullName>
    </recommendedName>
    <alternativeName>
        <fullName evidence="1">Cytochrome c maturation protein E</fullName>
    </alternativeName>
    <alternativeName>
        <fullName evidence="1">Heme chaperone CcmE</fullName>
    </alternativeName>
</protein>
<name>CCME_PASMU</name>
<accession>Q9CPM8</accession>
<gene>
    <name evidence="1" type="primary">ccmE</name>
    <name evidence="1" type="synonym">cycJ</name>
    <name type="ordered locus">PM0009</name>
</gene>
<proteinExistence type="inferred from homology"/>